<feature type="chain" id="PRO_0000134284" description="Small ribosomal subunit protein uS2">
    <location>
        <begin position="1"/>
        <end position="250"/>
    </location>
</feature>
<feature type="region of interest" description="Disordered" evidence="1">
    <location>
        <begin position="226"/>
        <end position="250"/>
    </location>
</feature>
<feature type="compositionally biased region" description="Low complexity" evidence="1">
    <location>
        <begin position="239"/>
        <end position="250"/>
    </location>
</feature>
<gene>
    <name type="primary">rpsB</name>
    <name type="ordered locus">ZMO1156</name>
</gene>
<comment type="similarity">
    <text evidence="2">Belongs to the universal ribosomal protein uS2 family.</text>
</comment>
<reference key="1">
    <citation type="submission" date="1999-01" db="EMBL/GenBank/DDBJ databases">
        <authorList>
            <person name="Lee H.J."/>
            <person name="Kang H.S."/>
        </authorList>
    </citation>
    <scope>NUCLEOTIDE SEQUENCE [GENOMIC DNA]</scope>
    <source>
        <strain>ATCC 31821 / ZM4 / CP4</strain>
    </source>
</reference>
<reference key="2">
    <citation type="journal article" date="2005" name="Nat. Biotechnol.">
        <title>The genome sequence of the ethanologenic bacterium Zymomonas mobilis ZM4.</title>
        <authorList>
            <person name="Seo J.-S."/>
            <person name="Chong H."/>
            <person name="Park H.S."/>
            <person name="Yoon K.-O."/>
            <person name="Jung C."/>
            <person name="Kim J.J."/>
            <person name="Hong J.H."/>
            <person name="Kim H."/>
            <person name="Kim J.-H."/>
            <person name="Kil J.-I."/>
            <person name="Park C.J."/>
            <person name="Oh H.-M."/>
            <person name="Lee J.-S."/>
            <person name="Jin S.-J."/>
            <person name="Um H.-W."/>
            <person name="Lee H.-J."/>
            <person name="Oh S.-J."/>
            <person name="Kim J.Y."/>
            <person name="Kang H.L."/>
            <person name="Lee S.Y."/>
            <person name="Lee K.J."/>
            <person name="Kang H.S."/>
        </authorList>
    </citation>
    <scope>NUCLEOTIDE SEQUENCE [LARGE SCALE GENOMIC DNA]</scope>
    <source>
        <strain>ATCC 31821 / ZM4 / CP4</strain>
    </source>
</reference>
<keyword id="KW-1185">Reference proteome</keyword>
<keyword id="KW-0687">Ribonucleoprotein</keyword>
<keyword id="KW-0689">Ribosomal protein</keyword>
<evidence type="ECO:0000256" key="1">
    <source>
        <dbReference type="SAM" id="MobiDB-lite"/>
    </source>
</evidence>
<evidence type="ECO:0000305" key="2"/>
<name>RS2_ZYMMO</name>
<organism>
    <name type="scientific">Zymomonas mobilis subsp. mobilis (strain ATCC 31821 / ZM4 / CP4)</name>
    <dbReference type="NCBI Taxonomy" id="264203"/>
    <lineage>
        <taxon>Bacteria</taxon>
        <taxon>Pseudomonadati</taxon>
        <taxon>Pseudomonadota</taxon>
        <taxon>Alphaproteobacteria</taxon>
        <taxon>Sphingomonadales</taxon>
        <taxon>Zymomonadaceae</taxon>
        <taxon>Zymomonas</taxon>
    </lineage>
</organism>
<accession>Q9X5E7</accession>
<accession>Q5NND0</accession>
<sequence>MAVPTVTMQSLLDVGAHFGHQTHRWNPKMKPYIFGDRNGIHIMDLSQTVPLFTRALDFISQTVAHGGKVLFVGTKRQAQEPIADAARRSGQFFVNHRWLGGMLTNWRTISGSIKRLKSLEEKLSGDTAGFTKKEILQLTRERDKLELSLGGIRDMGTIPDIMFVVDANKEELAIKEANTLGIPVVAILDSNVSPDGIAFPIPANDDAARAVRYYCDAIAEAATRGDQQNRQELGEDLGAAVEPAAEEALA</sequence>
<dbReference type="EMBL" id="AF124757">
    <property type="protein sequence ID" value="AAD29654.1"/>
    <property type="molecule type" value="Genomic_DNA"/>
</dbReference>
<dbReference type="EMBL" id="AE008692">
    <property type="protein sequence ID" value="AAV89780.1"/>
    <property type="molecule type" value="Genomic_DNA"/>
</dbReference>
<dbReference type="RefSeq" id="WP_011240983.1">
    <property type="nucleotide sequence ID" value="NZ_CP035711.1"/>
</dbReference>
<dbReference type="SMR" id="Q9X5E7"/>
<dbReference type="STRING" id="264203.ZMO1156"/>
<dbReference type="GeneID" id="79903719"/>
<dbReference type="KEGG" id="zmo:ZMO1156"/>
<dbReference type="eggNOG" id="COG0052">
    <property type="taxonomic scope" value="Bacteria"/>
</dbReference>
<dbReference type="HOGENOM" id="CLU_040318_1_3_5"/>
<dbReference type="Proteomes" id="UP000001173">
    <property type="component" value="Chromosome"/>
</dbReference>
<dbReference type="GO" id="GO:0022627">
    <property type="term" value="C:cytosolic small ribosomal subunit"/>
    <property type="evidence" value="ECO:0007669"/>
    <property type="project" value="TreeGrafter"/>
</dbReference>
<dbReference type="GO" id="GO:0003735">
    <property type="term" value="F:structural constituent of ribosome"/>
    <property type="evidence" value="ECO:0007669"/>
    <property type="project" value="InterPro"/>
</dbReference>
<dbReference type="GO" id="GO:0006412">
    <property type="term" value="P:translation"/>
    <property type="evidence" value="ECO:0007669"/>
    <property type="project" value="UniProtKB-UniRule"/>
</dbReference>
<dbReference type="CDD" id="cd01425">
    <property type="entry name" value="RPS2"/>
    <property type="match status" value="1"/>
</dbReference>
<dbReference type="Gene3D" id="3.40.50.10490">
    <property type="entry name" value="Glucose-6-phosphate isomerase like protein, domain 1"/>
    <property type="match status" value="1"/>
</dbReference>
<dbReference type="Gene3D" id="1.10.287.610">
    <property type="entry name" value="Helix hairpin bin"/>
    <property type="match status" value="1"/>
</dbReference>
<dbReference type="HAMAP" id="MF_00291_B">
    <property type="entry name" value="Ribosomal_uS2_B"/>
    <property type="match status" value="1"/>
</dbReference>
<dbReference type="InterPro" id="IPR001865">
    <property type="entry name" value="Ribosomal_uS2"/>
</dbReference>
<dbReference type="InterPro" id="IPR005706">
    <property type="entry name" value="Ribosomal_uS2_bac/mit/plastid"/>
</dbReference>
<dbReference type="InterPro" id="IPR018130">
    <property type="entry name" value="Ribosomal_uS2_CS"/>
</dbReference>
<dbReference type="InterPro" id="IPR023591">
    <property type="entry name" value="Ribosomal_uS2_flav_dom_sf"/>
</dbReference>
<dbReference type="NCBIfam" id="TIGR01011">
    <property type="entry name" value="rpsB_bact"/>
    <property type="match status" value="1"/>
</dbReference>
<dbReference type="PANTHER" id="PTHR12534">
    <property type="entry name" value="30S RIBOSOMAL PROTEIN S2 PROKARYOTIC AND ORGANELLAR"/>
    <property type="match status" value="1"/>
</dbReference>
<dbReference type="PANTHER" id="PTHR12534:SF0">
    <property type="entry name" value="SMALL RIBOSOMAL SUBUNIT PROTEIN US2M"/>
    <property type="match status" value="1"/>
</dbReference>
<dbReference type="Pfam" id="PF00318">
    <property type="entry name" value="Ribosomal_S2"/>
    <property type="match status" value="1"/>
</dbReference>
<dbReference type="PRINTS" id="PR00395">
    <property type="entry name" value="RIBOSOMALS2"/>
</dbReference>
<dbReference type="SUPFAM" id="SSF52313">
    <property type="entry name" value="Ribosomal protein S2"/>
    <property type="match status" value="1"/>
</dbReference>
<dbReference type="PROSITE" id="PS00963">
    <property type="entry name" value="RIBOSOMAL_S2_2"/>
    <property type="match status" value="1"/>
</dbReference>
<proteinExistence type="inferred from homology"/>
<protein>
    <recommendedName>
        <fullName evidence="2">Small ribosomal subunit protein uS2</fullName>
    </recommendedName>
    <alternativeName>
        <fullName>30S ribosomal protein S2</fullName>
    </alternativeName>
</protein>